<organism>
    <name type="scientific">Desulfotalea psychrophila (strain LSv54 / DSM 12343)</name>
    <dbReference type="NCBI Taxonomy" id="177439"/>
    <lineage>
        <taxon>Bacteria</taxon>
        <taxon>Pseudomonadati</taxon>
        <taxon>Thermodesulfobacteriota</taxon>
        <taxon>Desulfobulbia</taxon>
        <taxon>Desulfobulbales</taxon>
        <taxon>Desulfocapsaceae</taxon>
        <taxon>Desulfotalea</taxon>
    </lineage>
</organism>
<accession>Q6AMQ5</accession>
<sequence length="450" mass="48807">MRKLFGTDGIRGVANVHPMTMEIAMQVGRAIAFLVKKENYRHRIVIGKDTRLSGYMIENAIVAGICSMGVDVLLVGPLPTPGIAFITTSMRADAGVVISASHNPFQDNGIKIFFSDGFKLPDAMELKIEDLVLSQRMLALQPLAEEVGRASRIDDAKGRYIVFLKNTFPKKYTLDGFHIVIDCAHGATYGVAPHVFEELGAKVTALGIEPNGQNINAGCGALHPELMAGKVKELGADIGLAFDGDGDRLIVCDEHGVVVDGDHVMAICAKELLAQRKSKKKTLVATVMSNMGLEVAMKKMGGHLVRADVGDRYVVECMRKNGYSFGGEQSGHLVFLEHMTTGDGILAALQILAIMKKRKKTLSELAQVMQSFPQVLKNVRTAKKISVDSIVGFADAVKKYEMQLGDTGRILVRPSGTEPVIRVMVEGLDSAEINDIADELCELIRRVSNS</sequence>
<keyword id="KW-0413">Isomerase</keyword>
<keyword id="KW-0460">Magnesium</keyword>
<keyword id="KW-0479">Metal-binding</keyword>
<keyword id="KW-0597">Phosphoprotein</keyword>
<keyword id="KW-1185">Reference proteome</keyword>
<evidence type="ECO:0000255" key="1">
    <source>
        <dbReference type="HAMAP-Rule" id="MF_01554"/>
    </source>
</evidence>
<gene>
    <name evidence="1" type="primary">glmM</name>
    <name type="ordered locus">DP1641</name>
</gene>
<comment type="function">
    <text evidence="1">Catalyzes the conversion of glucosamine-6-phosphate to glucosamine-1-phosphate.</text>
</comment>
<comment type="catalytic activity">
    <reaction evidence="1">
        <text>alpha-D-glucosamine 1-phosphate = D-glucosamine 6-phosphate</text>
        <dbReference type="Rhea" id="RHEA:23424"/>
        <dbReference type="ChEBI" id="CHEBI:58516"/>
        <dbReference type="ChEBI" id="CHEBI:58725"/>
        <dbReference type="EC" id="5.4.2.10"/>
    </reaction>
</comment>
<comment type="cofactor">
    <cofactor evidence="1">
        <name>Mg(2+)</name>
        <dbReference type="ChEBI" id="CHEBI:18420"/>
    </cofactor>
    <text evidence="1">Binds 1 Mg(2+) ion per subunit.</text>
</comment>
<comment type="PTM">
    <text evidence="1">Activated by phosphorylation.</text>
</comment>
<comment type="similarity">
    <text evidence="1">Belongs to the phosphohexose mutase family.</text>
</comment>
<dbReference type="EC" id="5.4.2.10" evidence="1"/>
<dbReference type="EMBL" id="CR522870">
    <property type="protein sequence ID" value="CAG36370.1"/>
    <property type="molecule type" value="Genomic_DNA"/>
</dbReference>
<dbReference type="RefSeq" id="WP_011188882.1">
    <property type="nucleotide sequence ID" value="NC_006138.1"/>
</dbReference>
<dbReference type="SMR" id="Q6AMQ5"/>
<dbReference type="STRING" id="177439.DP1641"/>
<dbReference type="KEGG" id="dps:DP1641"/>
<dbReference type="eggNOG" id="COG1109">
    <property type="taxonomic scope" value="Bacteria"/>
</dbReference>
<dbReference type="HOGENOM" id="CLU_016950_7_0_7"/>
<dbReference type="OrthoDB" id="9806956at2"/>
<dbReference type="Proteomes" id="UP000000602">
    <property type="component" value="Chromosome"/>
</dbReference>
<dbReference type="GO" id="GO:0005829">
    <property type="term" value="C:cytosol"/>
    <property type="evidence" value="ECO:0007669"/>
    <property type="project" value="TreeGrafter"/>
</dbReference>
<dbReference type="GO" id="GO:0000287">
    <property type="term" value="F:magnesium ion binding"/>
    <property type="evidence" value="ECO:0007669"/>
    <property type="project" value="UniProtKB-UniRule"/>
</dbReference>
<dbReference type="GO" id="GO:0008966">
    <property type="term" value="F:phosphoglucosamine mutase activity"/>
    <property type="evidence" value="ECO:0007669"/>
    <property type="project" value="UniProtKB-UniRule"/>
</dbReference>
<dbReference type="GO" id="GO:0004615">
    <property type="term" value="F:phosphomannomutase activity"/>
    <property type="evidence" value="ECO:0007669"/>
    <property type="project" value="TreeGrafter"/>
</dbReference>
<dbReference type="GO" id="GO:0005975">
    <property type="term" value="P:carbohydrate metabolic process"/>
    <property type="evidence" value="ECO:0007669"/>
    <property type="project" value="InterPro"/>
</dbReference>
<dbReference type="GO" id="GO:0009252">
    <property type="term" value="P:peptidoglycan biosynthetic process"/>
    <property type="evidence" value="ECO:0007669"/>
    <property type="project" value="TreeGrafter"/>
</dbReference>
<dbReference type="GO" id="GO:0006048">
    <property type="term" value="P:UDP-N-acetylglucosamine biosynthetic process"/>
    <property type="evidence" value="ECO:0007669"/>
    <property type="project" value="TreeGrafter"/>
</dbReference>
<dbReference type="CDD" id="cd05802">
    <property type="entry name" value="GlmM"/>
    <property type="match status" value="1"/>
</dbReference>
<dbReference type="FunFam" id="3.30.310.50:FF:000001">
    <property type="entry name" value="Phosphoglucosamine mutase"/>
    <property type="match status" value="1"/>
</dbReference>
<dbReference type="FunFam" id="3.40.120.10:FF:000001">
    <property type="entry name" value="Phosphoglucosamine mutase"/>
    <property type="match status" value="1"/>
</dbReference>
<dbReference type="FunFam" id="3.40.120.10:FF:000002">
    <property type="entry name" value="Phosphoglucosamine mutase"/>
    <property type="match status" value="1"/>
</dbReference>
<dbReference type="Gene3D" id="3.40.120.10">
    <property type="entry name" value="Alpha-D-Glucose-1,6-Bisphosphate, subunit A, domain 3"/>
    <property type="match status" value="3"/>
</dbReference>
<dbReference type="Gene3D" id="3.30.310.50">
    <property type="entry name" value="Alpha-D-phosphohexomutase, C-terminal domain"/>
    <property type="match status" value="1"/>
</dbReference>
<dbReference type="HAMAP" id="MF_01554_B">
    <property type="entry name" value="GlmM_B"/>
    <property type="match status" value="1"/>
</dbReference>
<dbReference type="InterPro" id="IPR005844">
    <property type="entry name" value="A-D-PHexomutase_a/b/a-I"/>
</dbReference>
<dbReference type="InterPro" id="IPR016055">
    <property type="entry name" value="A-D-PHexomutase_a/b/a-I/II/III"/>
</dbReference>
<dbReference type="InterPro" id="IPR005845">
    <property type="entry name" value="A-D-PHexomutase_a/b/a-II"/>
</dbReference>
<dbReference type="InterPro" id="IPR005846">
    <property type="entry name" value="A-D-PHexomutase_a/b/a-III"/>
</dbReference>
<dbReference type="InterPro" id="IPR005843">
    <property type="entry name" value="A-D-PHexomutase_C"/>
</dbReference>
<dbReference type="InterPro" id="IPR036900">
    <property type="entry name" value="A-D-PHexomutase_C_sf"/>
</dbReference>
<dbReference type="InterPro" id="IPR016066">
    <property type="entry name" value="A-D-PHexomutase_CS"/>
</dbReference>
<dbReference type="InterPro" id="IPR005841">
    <property type="entry name" value="Alpha-D-phosphohexomutase_SF"/>
</dbReference>
<dbReference type="InterPro" id="IPR006352">
    <property type="entry name" value="GlmM_bact"/>
</dbReference>
<dbReference type="InterPro" id="IPR050060">
    <property type="entry name" value="Phosphoglucosamine_mutase"/>
</dbReference>
<dbReference type="NCBIfam" id="TIGR01455">
    <property type="entry name" value="glmM"/>
    <property type="match status" value="1"/>
</dbReference>
<dbReference type="NCBIfam" id="NF008139">
    <property type="entry name" value="PRK10887.1"/>
    <property type="match status" value="1"/>
</dbReference>
<dbReference type="PANTHER" id="PTHR42946:SF1">
    <property type="entry name" value="PHOSPHOGLUCOMUTASE (ALPHA-D-GLUCOSE-1,6-BISPHOSPHATE-DEPENDENT)"/>
    <property type="match status" value="1"/>
</dbReference>
<dbReference type="PANTHER" id="PTHR42946">
    <property type="entry name" value="PHOSPHOHEXOSE MUTASE"/>
    <property type="match status" value="1"/>
</dbReference>
<dbReference type="Pfam" id="PF02878">
    <property type="entry name" value="PGM_PMM_I"/>
    <property type="match status" value="1"/>
</dbReference>
<dbReference type="Pfam" id="PF02879">
    <property type="entry name" value="PGM_PMM_II"/>
    <property type="match status" value="1"/>
</dbReference>
<dbReference type="Pfam" id="PF02880">
    <property type="entry name" value="PGM_PMM_III"/>
    <property type="match status" value="1"/>
</dbReference>
<dbReference type="Pfam" id="PF00408">
    <property type="entry name" value="PGM_PMM_IV"/>
    <property type="match status" value="1"/>
</dbReference>
<dbReference type="PRINTS" id="PR00509">
    <property type="entry name" value="PGMPMM"/>
</dbReference>
<dbReference type="SUPFAM" id="SSF55957">
    <property type="entry name" value="Phosphoglucomutase, C-terminal domain"/>
    <property type="match status" value="1"/>
</dbReference>
<dbReference type="SUPFAM" id="SSF53738">
    <property type="entry name" value="Phosphoglucomutase, first 3 domains"/>
    <property type="match status" value="3"/>
</dbReference>
<dbReference type="PROSITE" id="PS00710">
    <property type="entry name" value="PGM_PMM"/>
    <property type="match status" value="1"/>
</dbReference>
<name>GLMM_DESPS</name>
<proteinExistence type="inferred from homology"/>
<protein>
    <recommendedName>
        <fullName evidence="1">Phosphoglucosamine mutase</fullName>
        <ecNumber evidence="1">5.4.2.10</ecNumber>
    </recommendedName>
</protein>
<feature type="chain" id="PRO_0000147884" description="Phosphoglucosamine mutase">
    <location>
        <begin position="1"/>
        <end position="450"/>
    </location>
</feature>
<feature type="active site" description="Phosphoserine intermediate" evidence="1">
    <location>
        <position position="101"/>
    </location>
</feature>
<feature type="binding site" description="via phosphate group" evidence="1">
    <location>
        <position position="101"/>
    </location>
    <ligand>
        <name>Mg(2+)</name>
        <dbReference type="ChEBI" id="CHEBI:18420"/>
    </ligand>
</feature>
<feature type="binding site" evidence="1">
    <location>
        <position position="243"/>
    </location>
    <ligand>
        <name>Mg(2+)</name>
        <dbReference type="ChEBI" id="CHEBI:18420"/>
    </ligand>
</feature>
<feature type="binding site" evidence="1">
    <location>
        <position position="245"/>
    </location>
    <ligand>
        <name>Mg(2+)</name>
        <dbReference type="ChEBI" id="CHEBI:18420"/>
    </ligand>
</feature>
<feature type="binding site" evidence="1">
    <location>
        <position position="247"/>
    </location>
    <ligand>
        <name>Mg(2+)</name>
        <dbReference type="ChEBI" id="CHEBI:18420"/>
    </ligand>
</feature>
<feature type="modified residue" description="Phosphoserine" evidence="1">
    <location>
        <position position="101"/>
    </location>
</feature>
<reference key="1">
    <citation type="journal article" date="2004" name="Environ. Microbiol.">
        <title>The genome of Desulfotalea psychrophila, a sulfate-reducing bacterium from permanently cold Arctic sediments.</title>
        <authorList>
            <person name="Rabus R."/>
            <person name="Ruepp A."/>
            <person name="Frickey T."/>
            <person name="Rattei T."/>
            <person name="Fartmann B."/>
            <person name="Stark M."/>
            <person name="Bauer M."/>
            <person name="Zibat A."/>
            <person name="Lombardot T."/>
            <person name="Becker I."/>
            <person name="Amann J."/>
            <person name="Gellner K."/>
            <person name="Teeling H."/>
            <person name="Leuschner W.D."/>
            <person name="Gloeckner F.-O."/>
            <person name="Lupas A.N."/>
            <person name="Amann R."/>
            <person name="Klenk H.-P."/>
        </authorList>
    </citation>
    <scope>NUCLEOTIDE SEQUENCE [LARGE SCALE GENOMIC DNA]</scope>
    <source>
        <strain>DSM 12343 / LSv54</strain>
    </source>
</reference>